<reference key="1">
    <citation type="journal article" date="2009" name="Plant Mol. Biol.">
        <title>Insights into corn genes derived from large-scale cDNA sequencing.</title>
        <authorList>
            <person name="Alexandrov N.N."/>
            <person name="Brover V.V."/>
            <person name="Freidin S."/>
            <person name="Troukhan M.E."/>
            <person name="Tatarinova T.V."/>
            <person name="Zhang H."/>
            <person name="Swaller T.J."/>
            <person name="Lu Y.-P."/>
            <person name="Bouck J."/>
            <person name="Flavell R.B."/>
            <person name="Feldmann K.A."/>
        </authorList>
    </citation>
    <scope>NUCLEOTIDE SEQUENCE [LARGE SCALE MRNA]</scope>
</reference>
<reference key="2">
    <citation type="journal article" date="2009" name="PLoS Genet.">
        <title>Sequencing, mapping, and analysis of 27,455 maize full-length cDNAs.</title>
        <authorList>
            <person name="Soderlund C."/>
            <person name="Descour A."/>
            <person name="Kudrna D."/>
            <person name="Bomhoff M."/>
            <person name="Boyd L."/>
            <person name="Currie J."/>
            <person name="Angelova A."/>
            <person name="Collura K."/>
            <person name="Wissotski M."/>
            <person name="Ashley E."/>
            <person name="Morrow D."/>
            <person name="Fernandes J."/>
            <person name="Walbot V."/>
            <person name="Yu Y."/>
        </authorList>
    </citation>
    <scope>NUCLEOTIDE SEQUENCE [LARGE SCALE MRNA]</scope>
    <source>
        <strain>cv. B73</strain>
    </source>
</reference>
<keyword id="KW-0067">ATP-binding</keyword>
<keyword id="KW-0150">Chloroplast</keyword>
<keyword id="KW-0436">Ligase</keyword>
<keyword id="KW-0496">Mitochondrion</keyword>
<keyword id="KW-0547">Nucleotide-binding</keyword>
<keyword id="KW-0934">Plastid</keyword>
<keyword id="KW-0648">Protein biosynthesis</keyword>
<keyword id="KW-1185">Reference proteome</keyword>
<organism>
    <name type="scientific">Zea mays</name>
    <name type="common">Maize</name>
    <dbReference type="NCBI Taxonomy" id="4577"/>
    <lineage>
        <taxon>Eukaryota</taxon>
        <taxon>Viridiplantae</taxon>
        <taxon>Streptophyta</taxon>
        <taxon>Embryophyta</taxon>
        <taxon>Tracheophyta</taxon>
        <taxon>Spermatophyta</taxon>
        <taxon>Magnoliopsida</taxon>
        <taxon>Liliopsida</taxon>
        <taxon>Poales</taxon>
        <taxon>Poaceae</taxon>
        <taxon>PACMAD clade</taxon>
        <taxon>Panicoideae</taxon>
        <taxon>Andropogonodae</taxon>
        <taxon>Andropogoneae</taxon>
        <taxon>Tripsacinae</taxon>
        <taxon>Zea</taxon>
    </lineage>
</organism>
<dbReference type="EC" id="6.3.5.7" evidence="1"/>
<dbReference type="EMBL" id="EU970966">
    <property type="protein sequence ID" value="ACG43084.1"/>
    <property type="molecule type" value="mRNA"/>
</dbReference>
<dbReference type="EMBL" id="BT055492">
    <property type="protein sequence ID" value="ACL54099.1"/>
    <property type="molecule type" value="mRNA"/>
</dbReference>
<dbReference type="RefSeq" id="NP_001146476.1">
    <property type="nucleotide sequence ID" value="NM_001153004.1"/>
</dbReference>
<dbReference type="SMR" id="B6U151"/>
<dbReference type="FunCoup" id="B6U151">
    <property type="interactions" value="1772"/>
</dbReference>
<dbReference type="STRING" id="4577.B6U151"/>
<dbReference type="PaxDb" id="4577-GRMZM2G022192_P01"/>
<dbReference type="EnsemblPlants" id="Zm00001eb068770_T002">
    <property type="protein sequence ID" value="Zm00001eb068770_P002"/>
    <property type="gene ID" value="Zm00001eb068770"/>
</dbReference>
<dbReference type="GeneID" id="100280064"/>
<dbReference type="Gramene" id="Zm00001eb068770_T002">
    <property type="protein sequence ID" value="Zm00001eb068770_P002"/>
    <property type="gene ID" value="Zm00001eb068770"/>
</dbReference>
<dbReference type="KEGG" id="zma:100280064"/>
<dbReference type="eggNOG" id="KOG1211">
    <property type="taxonomic scope" value="Eukaryota"/>
</dbReference>
<dbReference type="HOGENOM" id="CLU_009600_0_3_1"/>
<dbReference type="InParanoid" id="B6U151"/>
<dbReference type="OMA" id="QPASYCG"/>
<dbReference type="OrthoDB" id="421993at2759"/>
<dbReference type="Proteomes" id="UP000007305">
    <property type="component" value="Chromosome 2"/>
</dbReference>
<dbReference type="ExpressionAtlas" id="B6U151">
    <property type="expression patterns" value="baseline and differential"/>
</dbReference>
<dbReference type="GO" id="GO:0009570">
    <property type="term" value="C:chloroplast stroma"/>
    <property type="evidence" value="ECO:0007669"/>
    <property type="project" value="UniProtKB-SubCell"/>
</dbReference>
<dbReference type="GO" id="GO:0030956">
    <property type="term" value="C:glutamyl-tRNA(Gln) amidotransferase complex"/>
    <property type="evidence" value="ECO:0007669"/>
    <property type="project" value="UniProtKB-UniRule"/>
</dbReference>
<dbReference type="GO" id="GO:0005739">
    <property type="term" value="C:mitochondrion"/>
    <property type="evidence" value="ECO:0007669"/>
    <property type="project" value="UniProtKB-SubCell"/>
</dbReference>
<dbReference type="GO" id="GO:0005524">
    <property type="term" value="F:ATP binding"/>
    <property type="evidence" value="ECO:0007669"/>
    <property type="project" value="UniProtKB-KW"/>
</dbReference>
<dbReference type="GO" id="GO:0050567">
    <property type="term" value="F:glutaminyl-tRNA synthase (glutamine-hydrolyzing) activity"/>
    <property type="evidence" value="ECO:0000318"/>
    <property type="project" value="GO_Central"/>
</dbReference>
<dbReference type="GO" id="GO:0016811">
    <property type="term" value="F:hydrolase activity, acting on carbon-nitrogen (but not peptide) bonds, in linear amides"/>
    <property type="evidence" value="ECO:0007669"/>
    <property type="project" value="UniProtKB-ARBA"/>
</dbReference>
<dbReference type="GO" id="GO:0070681">
    <property type="term" value="P:glutaminyl-tRNAGln biosynthesis via transamidation"/>
    <property type="evidence" value="ECO:0007669"/>
    <property type="project" value="UniProtKB-UniRule"/>
</dbReference>
<dbReference type="GO" id="GO:0032543">
    <property type="term" value="P:mitochondrial translation"/>
    <property type="evidence" value="ECO:0007669"/>
    <property type="project" value="UniProtKB-UniRule"/>
</dbReference>
<dbReference type="Gene3D" id="3.90.1300.10">
    <property type="entry name" value="Amidase signature (AS) domain"/>
    <property type="match status" value="1"/>
</dbReference>
<dbReference type="HAMAP" id="MF_00120">
    <property type="entry name" value="GatA"/>
    <property type="match status" value="1"/>
</dbReference>
<dbReference type="InterPro" id="IPR000120">
    <property type="entry name" value="Amidase"/>
</dbReference>
<dbReference type="InterPro" id="IPR020556">
    <property type="entry name" value="Amidase_CS"/>
</dbReference>
<dbReference type="InterPro" id="IPR023631">
    <property type="entry name" value="Amidase_dom"/>
</dbReference>
<dbReference type="InterPro" id="IPR036928">
    <property type="entry name" value="AS_sf"/>
</dbReference>
<dbReference type="InterPro" id="IPR004412">
    <property type="entry name" value="GatA"/>
</dbReference>
<dbReference type="NCBIfam" id="TIGR00132">
    <property type="entry name" value="gatA"/>
    <property type="match status" value="1"/>
</dbReference>
<dbReference type="PANTHER" id="PTHR11895:SF7">
    <property type="entry name" value="GLUTAMYL-TRNA(GLN) AMIDOTRANSFERASE SUBUNIT A, MITOCHONDRIAL"/>
    <property type="match status" value="1"/>
</dbReference>
<dbReference type="PANTHER" id="PTHR11895">
    <property type="entry name" value="TRANSAMIDASE"/>
    <property type="match status" value="1"/>
</dbReference>
<dbReference type="Pfam" id="PF01425">
    <property type="entry name" value="Amidase"/>
    <property type="match status" value="1"/>
</dbReference>
<dbReference type="SUPFAM" id="SSF75304">
    <property type="entry name" value="Amidase signature (AS) enzymes"/>
    <property type="match status" value="1"/>
</dbReference>
<dbReference type="PROSITE" id="PS00571">
    <property type="entry name" value="AMIDASES"/>
    <property type="match status" value="1"/>
</dbReference>
<feature type="chain" id="PRO_0000413345" description="Glutamyl-tRNA(Gln) amidotransferase subunit A, chloroplastic/mitochondrial">
    <location>
        <begin position="1"/>
        <end position="543"/>
    </location>
</feature>
<feature type="active site" description="Charge relay system" evidence="1">
    <location>
        <position position="121"/>
    </location>
</feature>
<feature type="active site" description="Charge relay system" evidence="1">
    <location>
        <position position="196"/>
    </location>
</feature>
<feature type="active site" description="Acyl-ester intermediate" evidence="1">
    <location>
        <position position="220"/>
    </location>
</feature>
<proteinExistence type="evidence at transcript level"/>
<accession>B6U151</accession>
<evidence type="ECO:0000255" key="1">
    <source>
        <dbReference type="HAMAP-Rule" id="MF_03150"/>
    </source>
</evidence>
<name>GATA_MAIZE</name>
<sequence length="543" mass="57125">MPPPLQAHRLLISHRRLPTPARRRFTAASSVQSAPATTLAPGPATSSILSIRESLLSGERTAADITSEYLSRLRRTEPTLRSFIHVADAAAEREAEELDRRIASGEKDAVGPLAGVLVGVKDNLCTANMPSTGGSRILDGYRPAYDATAVRRLREAGAIVLGKTNLDEFGMGSTTEGSAFQVTTNPWDDSRVPGGSSGGSAAAVSARQCVVSLGSDTGGSVRQPASFCGVVGLKPTYGRVSRFGLMAYASSLDVVGCFGSSVFDTATILSVVAGHDKMDATSSSQVVPEYASELVSLDLLESKPLNGVRIGIIQETLGEGVASGVVSSIKGAASHLEQLGSVVEEVSLPSFSLGLPAYYILASSEASSNLSRYDGIRYGGQVSADDLNELYGESRANGFGHEVKMRILMGTYALSAGYYDAYYKRAQQVRTLVKQSFKDALERYDILISPAAPSAAYKIGEKINDPLAMYAGDIMTVNVNLAGLPALVVPCGFVEGGAAGLPVGLQMMGSPFCEGNLLRVGHIFEQTLQNLSFVPPLLAEGQL</sequence>
<protein>
    <recommendedName>
        <fullName evidence="1">Glutamyl-tRNA(Gln) amidotransferase subunit A, chloroplastic/mitochondrial</fullName>
        <shortName evidence="1">Glu-AdT subunit A</shortName>
        <ecNumber evidence="1">6.3.5.7</ecNumber>
    </recommendedName>
</protein>
<gene>
    <name evidence="1" type="primary">GATA</name>
</gene>
<comment type="function">
    <text evidence="1">Allows the formation of correctly charged Gln-tRNA(Gln) through the transamidation of misacylated Glu-tRNA(Gln) in chloroplasts and mitochondria. The reaction takes place in the presence of glutamine and ATP through an activated gamma-phospho-Glu-tRNA(Gln).</text>
</comment>
<comment type="catalytic activity">
    <reaction evidence="1">
        <text>L-glutamyl-tRNA(Gln) + L-glutamine + ATP + H2O = L-glutaminyl-tRNA(Gln) + L-glutamate + ADP + phosphate + H(+)</text>
        <dbReference type="Rhea" id="RHEA:17521"/>
        <dbReference type="Rhea" id="RHEA-COMP:9681"/>
        <dbReference type="Rhea" id="RHEA-COMP:9684"/>
        <dbReference type="ChEBI" id="CHEBI:15377"/>
        <dbReference type="ChEBI" id="CHEBI:15378"/>
        <dbReference type="ChEBI" id="CHEBI:29985"/>
        <dbReference type="ChEBI" id="CHEBI:30616"/>
        <dbReference type="ChEBI" id="CHEBI:43474"/>
        <dbReference type="ChEBI" id="CHEBI:58359"/>
        <dbReference type="ChEBI" id="CHEBI:78520"/>
        <dbReference type="ChEBI" id="CHEBI:78521"/>
        <dbReference type="ChEBI" id="CHEBI:456216"/>
        <dbReference type="EC" id="6.3.5.7"/>
    </reaction>
</comment>
<comment type="subunit">
    <text evidence="1">Subunit of the heterotrimeric GatCAB amidotransferase (AdT) complex, composed of A, B and C subunits.</text>
</comment>
<comment type="subcellular location">
    <subcellularLocation>
        <location evidence="1">Mitochondrion</location>
    </subcellularLocation>
    <subcellularLocation>
        <location evidence="1">Plastid</location>
        <location evidence="1">Chloroplast stroma</location>
    </subcellularLocation>
</comment>
<comment type="miscellaneous">
    <text evidence="1">This protein may be expected to contain an N-terminal transit peptide but none has been predicted.</text>
</comment>
<comment type="similarity">
    <text evidence="1">Belongs to the amidase family. GatA subfamily.</text>
</comment>